<reference key="1">
    <citation type="journal article" date="2006" name="Genome Res.">
        <title>Skewed genomic variability in strains of the toxigenic bacterial pathogen, Clostridium perfringens.</title>
        <authorList>
            <person name="Myers G.S.A."/>
            <person name="Rasko D.A."/>
            <person name="Cheung J.K."/>
            <person name="Ravel J."/>
            <person name="Seshadri R."/>
            <person name="DeBoy R.T."/>
            <person name="Ren Q."/>
            <person name="Varga J."/>
            <person name="Awad M.M."/>
            <person name="Brinkac L.M."/>
            <person name="Daugherty S.C."/>
            <person name="Haft D.H."/>
            <person name="Dodson R.J."/>
            <person name="Madupu R."/>
            <person name="Nelson W.C."/>
            <person name="Rosovitz M.J."/>
            <person name="Sullivan S.A."/>
            <person name="Khouri H."/>
            <person name="Dimitrov G.I."/>
            <person name="Watkins K.L."/>
            <person name="Mulligan S."/>
            <person name="Benton J."/>
            <person name="Radune D."/>
            <person name="Fisher D.J."/>
            <person name="Atkins H.S."/>
            <person name="Hiscox T."/>
            <person name="Jost B.H."/>
            <person name="Billington S.J."/>
            <person name="Songer J.G."/>
            <person name="McClane B.A."/>
            <person name="Titball R.W."/>
            <person name="Rood J.I."/>
            <person name="Melville S.B."/>
            <person name="Paulsen I.T."/>
        </authorList>
    </citation>
    <scope>NUCLEOTIDE SEQUENCE [LARGE SCALE GENOMIC DNA]</scope>
    <source>
        <strain>ATCC 13124 / DSM 756 / JCM 1290 / NCIMB 6125 / NCTC 8237 / S 107 / Type A</strain>
    </source>
</reference>
<sequence length="144" mass="16368">MLMPKRVKHRKVQRGRMKGKATRGNFLAYGDFGIQATTCGWITSNQIEAARIAINRYIRRGGKLWIKIFPDKPVTEKPAETRMGSGKGSVEYWVAVVKPGRVLFELSGVDEEKAREAMRLASHKLPVKTKFVTRRDFEEMGGEE</sequence>
<proteinExistence type="inferred from homology"/>
<dbReference type="EMBL" id="CP000246">
    <property type="protein sequence ID" value="ABG82604.1"/>
    <property type="molecule type" value="Genomic_DNA"/>
</dbReference>
<dbReference type="RefSeq" id="WP_003454381.1">
    <property type="nucleotide sequence ID" value="NC_008261.1"/>
</dbReference>
<dbReference type="SMR" id="Q0TMQ3"/>
<dbReference type="STRING" id="195103.CPF_2707"/>
<dbReference type="PaxDb" id="195103-CPF_2707"/>
<dbReference type="GeneID" id="93001016"/>
<dbReference type="KEGG" id="cpf:CPF_2707"/>
<dbReference type="eggNOG" id="COG0197">
    <property type="taxonomic scope" value="Bacteria"/>
</dbReference>
<dbReference type="HOGENOM" id="CLU_078858_2_1_9"/>
<dbReference type="Proteomes" id="UP000001823">
    <property type="component" value="Chromosome"/>
</dbReference>
<dbReference type="GO" id="GO:0022625">
    <property type="term" value="C:cytosolic large ribosomal subunit"/>
    <property type="evidence" value="ECO:0007669"/>
    <property type="project" value="TreeGrafter"/>
</dbReference>
<dbReference type="GO" id="GO:0019843">
    <property type="term" value="F:rRNA binding"/>
    <property type="evidence" value="ECO:0007669"/>
    <property type="project" value="UniProtKB-UniRule"/>
</dbReference>
<dbReference type="GO" id="GO:0003735">
    <property type="term" value="F:structural constituent of ribosome"/>
    <property type="evidence" value="ECO:0007669"/>
    <property type="project" value="InterPro"/>
</dbReference>
<dbReference type="GO" id="GO:0000049">
    <property type="term" value="F:tRNA binding"/>
    <property type="evidence" value="ECO:0007669"/>
    <property type="project" value="UniProtKB-KW"/>
</dbReference>
<dbReference type="GO" id="GO:0006412">
    <property type="term" value="P:translation"/>
    <property type="evidence" value="ECO:0007669"/>
    <property type="project" value="UniProtKB-UniRule"/>
</dbReference>
<dbReference type="CDD" id="cd01433">
    <property type="entry name" value="Ribosomal_L16_L10e"/>
    <property type="match status" value="1"/>
</dbReference>
<dbReference type="FunFam" id="3.90.1170.10:FF:000001">
    <property type="entry name" value="50S ribosomal protein L16"/>
    <property type="match status" value="1"/>
</dbReference>
<dbReference type="Gene3D" id="3.90.1170.10">
    <property type="entry name" value="Ribosomal protein L10e/L16"/>
    <property type="match status" value="1"/>
</dbReference>
<dbReference type="HAMAP" id="MF_01342">
    <property type="entry name" value="Ribosomal_uL16"/>
    <property type="match status" value="1"/>
</dbReference>
<dbReference type="InterPro" id="IPR047873">
    <property type="entry name" value="Ribosomal_uL16"/>
</dbReference>
<dbReference type="InterPro" id="IPR000114">
    <property type="entry name" value="Ribosomal_uL16_bact-type"/>
</dbReference>
<dbReference type="InterPro" id="IPR020798">
    <property type="entry name" value="Ribosomal_uL16_CS"/>
</dbReference>
<dbReference type="InterPro" id="IPR016180">
    <property type="entry name" value="Ribosomal_uL16_dom"/>
</dbReference>
<dbReference type="InterPro" id="IPR036920">
    <property type="entry name" value="Ribosomal_uL16_sf"/>
</dbReference>
<dbReference type="NCBIfam" id="TIGR01164">
    <property type="entry name" value="rplP_bact"/>
    <property type="match status" value="1"/>
</dbReference>
<dbReference type="PANTHER" id="PTHR12220">
    <property type="entry name" value="50S/60S RIBOSOMAL PROTEIN L16"/>
    <property type="match status" value="1"/>
</dbReference>
<dbReference type="PANTHER" id="PTHR12220:SF13">
    <property type="entry name" value="LARGE RIBOSOMAL SUBUNIT PROTEIN UL16M"/>
    <property type="match status" value="1"/>
</dbReference>
<dbReference type="Pfam" id="PF00252">
    <property type="entry name" value="Ribosomal_L16"/>
    <property type="match status" value="1"/>
</dbReference>
<dbReference type="PRINTS" id="PR00060">
    <property type="entry name" value="RIBOSOMALL16"/>
</dbReference>
<dbReference type="SUPFAM" id="SSF54686">
    <property type="entry name" value="Ribosomal protein L16p/L10e"/>
    <property type="match status" value="1"/>
</dbReference>
<dbReference type="PROSITE" id="PS00586">
    <property type="entry name" value="RIBOSOMAL_L16_1"/>
    <property type="match status" value="1"/>
</dbReference>
<dbReference type="PROSITE" id="PS00701">
    <property type="entry name" value="RIBOSOMAL_L16_2"/>
    <property type="match status" value="1"/>
</dbReference>
<accession>Q0TMQ3</accession>
<evidence type="ECO:0000255" key="1">
    <source>
        <dbReference type="HAMAP-Rule" id="MF_01342"/>
    </source>
</evidence>
<evidence type="ECO:0000305" key="2"/>
<protein>
    <recommendedName>
        <fullName evidence="1">Large ribosomal subunit protein uL16</fullName>
    </recommendedName>
    <alternativeName>
        <fullName evidence="2">50S ribosomal protein L16</fullName>
    </alternativeName>
</protein>
<organism>
    <name type="scientific">Clostridium perfringens (strain ATCC 13124 / DSM 756 / JCM 1290 / NCIMB 6125 / NCTC 8237 / Type A)</name>
    <dbReference type="NCBI Taxonomy" id="195103"/>
    <lineage>
        <taxon>Bacteria</taxon>
        <taxon>Bacillati</taxon>
        <taxon>Bacillota</taxon>
        <taxon>Clostridia</taxon>
        <taxon>Eubacteriales</taxon>
        <taxon>Clostridiaceae</taxon>
        <taxon>Clostridium</taxon>
    </lineage>
</organism>
<gene>
    <name evidence="1" type="primary">rplP</name>
    <name type="ordered locus">CPF_2707</name>
</gene>
<comment type="function">
    <text evidence="1">Binds 23S rRNA and is also seen to make contacts with the A and possibly P site tRNAs.</text>
</comment>
<comment type="subunit">
    <text evidence="1">Part of the 50S ribosomal subunit.</text>
</comment>
<comment type="similarity">
    <text evidence="1">Belongs to the universal ribosomal protein uL16 family.</text>
</comment>
<name>RL16_CLOP1</name>
<keyword id="KW-0687">Ribonucleoprotein</keyword>
<keyword id="KW-0689">Ribosomal protein</keyword>
<keyword id="KW-0694">RNA-binding</keyword>
<keyword id="KW-0699">rRNA-binding</keyword>
<keyword id="KW-0820">tRNA-binding</keyword>
<feature type="chain" id="PRO_1000054610" description="Large ribosomal subunit protein uL16">
    <location>
        <begin position="1"/>
        <end position="144"/>
    </location>
</feature>